<organism>
    <name type="scientific">Saccharomyces cerevisiae (strain ATCC 204508 / S288c)</name>
    <name type="common">Baker's yeast</name>
    <dbReference type="NCBI Taxonomy" id="559292"/>
    <lineage>
        <taxon>Eukaryota</taxon>
        <taxon>Fungi</taxon>
        <taxon>Dikarya</taxon>
        <taxon>Ascomycota</taxon>
        <taxon>Saccharomycotina</taxon>
        <taxon>Saccharomycetes</taxon>
        <taxon>Saccharomycetales</taxon>
        <taxon>Saccharomycetaceae</taxon>
        <taxon>Saccharomyces</taxon>
    </lineage>
</organism>
<reference key="1">
    <citation type="journal article" date="1989" name="Science">
        <title>BAS1 has a Myb motif and activates HIS4 transcription only in combination with BAS2.</title>
        <authorList>
            <person name="Tice-Baldwin K."/>
            <person name="Fink G.R."/>
            <person name="Arndt K.T."/>
        </authorList>
    </citation>
    <scope>NUCLEOTIDE SEQUENCE [GENOMIC DNA]</scope>
</reference>
<reference key="2">
    <citation type="journal article" date="1994" name="Nature">
        <title>Complete DNA sequence of yeast chromosome XI.</title>
        <authorList>
            <person name="Dujon B."/>
            <person name="Alexandraki D."/>
            <person name="Andre B."/>
            <person name="Ansorge W."/>
            <person name="Baladron V."/>
            <person name="Ballesta J.P.G."/>
            <person name="Banrevi A."/>
            <person name="Bolle P.-A."/>
            <person name="Bolotin-Fukuhara M."/>
            <person name="Bossier P."/>
            <person name="Bou G."/>
            <person name="Boyer J."/>
            <person name="Buitrago M.J."/>
            <person name="Cheret G."/>
            <person name="Colleaux L."/>
            <person name="Daignan-Fornier B."/>
            <person name="del Rey F."/>
            <person name="Dion C."/>
            <person name="Domdey H."/>
            <person name="Duesterhoeft A."/>
            <person name="Duesterhus S."/>
            <person name="Entian K.-D."/>
            <person name="Erfle H."/>
            <person name="Esteban P.F."/>
            <person name="Feldmann H."/>
            <person name="Fernandes L."/>
            <person name="Fobo G.M."/>
            <person name="Fritz C."/>
            <person name="Fukuhara H."/>
            <person name="Gabel C."/>
            <person name="Gaillon L."/>
            <person name="Garcia-Cantalejo J.M."/>
            <person name="Garcia-Ramirez J.J."/>
            <person name="Gent M.E."/>
            <person name="Ghazvini M."/>
            <person name="Goffeau A."/>
            <person name="Gonzalez A."/>
            <person name="Grothues D."/>
            <person name="Guerreiro P."/>
            <person name="Hegemann J.H."/>
            <person name="Hewitt N."/>
            <person name="Hilger F."/>
            <person name="Hollenberg C.P."/>
            <person name="Horaitis O."/>
            <person name="Indge K.J."/>
            <person name="Jacquier A."/>
            <person name="James C.M."/>
            <person name="Jauniaux J.-C."/>
            <person name="Jimenez A."/>
            <person name="Keuchel H."/>
            <person name="Kirchrath L."/>
            <person name="Kleine K."/>
            <person name="Koetter P."/>
            <person name="Legrain P."/>
            <person name="Liebl S."/>
            <person name="Louis E.J."/>
            <person name="Maia e Silva A."/>
            <person name="Marck C."/>
            <person name="Monnier A.-L."/>
            <person name="Moestl D."/>
            <person name="Mueller S."/>
            <person name="Obermaier B."/>
            <person name="Oliver S.G."/>
            <person name="Pallier C."/>
            <person name="Pascolo S."/>
            <person name="Pfeiffer F."/>
            <person name="Philippsen P."/>
            <person name="Planta R.J."/>
            <person name="Pohl F.M."/>
            <person name="Pohl T.M."/>
            <person name="Poehlmann R."/>
            <person name="Portetelle D."/>
            <person name="Purnelle B."/>
            <person name="Puzos V."/>
            <person name="Ramezani Rad M."/>
            <person name="Rasmussen S.W."/>
            <person name="Remacha M.A."/>
            <person name="Revuelta J.L."/>
            <person name="Richard G.-F."/>
            <person name="Rieger M."/>
            <person name="Rodrigues-Pousada C."/>
            <person name="Rose M."/>
            <person name="Rupp T."/>
            <person name="Santos M.A."/>
            <person name="Schwager C."/>
            <person name="Sensen C."/>
            <person name="Skala J."/>
            <person name="Soares H."/>
            <person name="Sor F."/>
            <person name="Stegemann J."/>
            <person name="Tettelin H."/>
            <person name="Thierry A."/>
            <person name="Tzermia M."/>
            <person name="Urrestarazu L.A."/>
            <person name="van Dyck L."/>
            <person name="van Vliet-Reedijk J.C."/>
            <person name="Valens M."/>
            <person name="Vandenbol M."/>
            <person name="Vilela C."/>
            <person name="Vissers S."/>
            <person name="von Wettstein D."/>
            <person name="Voss H."/>
            <person name="Wiemann S."/>
            <person name="Xu G."/>
            <person name="Zimmermann J."/>
            <person name="Haasemann M."/>
            <person name="Becker I."/>
            <person name="Mewes H.-W."/>
        </authorList>
    </citation>
    <scope>NUCLEOTIDE SEQUENCE [LARGE SCALE GENOMIC DNA]</scope>
    <source>
        <strain>ATCC 204508 / S288c</strain>
    </source>
</reference>
<reference key="3">
    <citation type="journal article" date="2014" name="G3 (Bethesda)">
        <title>The reference genome sequence of Saccharomyces cerevisiae: Then and now.</title>
        <authorList>
            <person name="Engel S.R."/>
            <person name="Dietrich F.S."/>
            <person name="Fisk D.G."/>
            <person name="Binkley G."/>
            <person name="Balakrishnan R."/>
            <person name="Costanzo M.C."/>
            <person name="Dwight S.S."/>
            <person name="Hitz B.C."/>
            <person name="Karra K."/>
            <person name="Nash R.S."/>
            <person name="Weng S."/>
            <person name="Wong E.D."/>
            <person name="Lloyd P."/>
            <person name="Skrzypek M.S."/>
            <person name="Miyasato S.R."/>
            <person name="Simison M."/>
            <person name="Cherry J.M."/>
        </authorList>
    </citation>
    <scope>GENOME REANNOTATION</scope>
    <source>
        <strain>ATCC 204508 / S288c</strain>
    </source>
</reference>
<reference key="4">
    <citation type="journal article" date="1994" name="J. Biol. Chem.">
        <title>DNA-binding domain and recognition sequence of the yeast BAS1 protein, a divergent member of the Myb family of transcription factors.</title>
        <authorList>
            <person name="Hoevring P.I."/>
            <person name="Bostad A."/>
            <person name="Ording E."/>
            <person name="Myrset A.H."/>
            <person name="Gabrielsen O.S."/>
        </authorList>
    </citation>
    <scope>DNA-BINDING REGION</scope>
</reference>
<reference key="5">
    <citation type="journal article" date="1998" name="Mol. Microbiol.">
        <title>Role of the myb-like protein bas1p in Saccharomyces cerevisiae: a proteome analysis.</title>
        <authorList>
            <person name="Denis V."/>
            <person name="Boucherie H."/>
            <person name="Monribot C."/>
            <person name="Daignan-Fornier B."/>
        </authorList>
    </citation>
    <scope>FUNCTION</scope>
</reference>
<reference key="6">
    <citation type="journal article" date="2003" name="Nature">
        <title>Global analysis of protein expression in yeast.</title>
        <authorList>
            <person name="Ghaemmaghami S."/>
            <person name="Huh W.-K."/>
            <person name="Bower K."/>
            <person name="Howson R.W."/>
            <person name="Belle A."/>
            <person name="Dephoure N."/>
            <person name="O'Shea E.K."/>
            <person name="Weissman J.S."/>
        </authorList>
    </citation>
    <scope>LEVEL OF PROTEIN EXPRESSION [LARGE SCALE ANALYSIS]</scope>
</reference>
<reference key="7">
    <citation type="journal article" date="2009" name="Science">
        <title>Global analysis of Cdk1 substrate phosphorylation sites provides insights into evolution.</title>
        <authorList>
            <person name="Holt L.J."/>
            <person name="Tuch B.B."/>
            <person name="Villen J."/>
            <person name="Johnson A.D."/>
            <person name="Gygi S.P."/>
            <person name="Morgan D.O."/>
        </authorList>
    </citation>
    <scope>IDENTIFICATION BY MASS SPECTROMETRY [LARGE SCALE ANALYSIS]</scope>
</reference>
<evidence type="ECO:0000255" key="1">
    <source>
        <dbReference type="PROSITE-ProRule" id="PRU00133"/>
    </source>
</evidence>
<evidence type="ECO:0000255" key="2">
    <source>
        <dbReference type="PROSITE-ProRule" id="PRU00625"/>
    </source>
</evidence>
<evidence type="ECO:0000256" key="3">
    <source>
        <dbReference type="SAM" id="MobiDB-lite"/>
    </source>
</evidence>
<evidence type="ECO:0000269" key="4">
    <source>
    </source>
</evidence>
<evidence type="ECO:0000269" key="5">
    <source>
    </source>
</evidence>
<name>BAS1_YEAST</name>
<dbReference type="EMBL" id="M58057">
    <property type="protein sequence ID" value="AAB04030.1"/>
    <property type="molecule type" value="Genomic_DNA"/>
</dbReference>
<dbReference type="EMBL" id="Z28324">
    <property type="protein sequence ID" value="CAA82179.1"/>
    <property type="molecule type" value="Genomic_DNA"/>
</dbReference>
<dbReference type="EMBL" id="BK006944">
    <property type="protein sequence ID" value="DAA09250.1"/>
    <property type="molecule type" value="Genomic_DNA"/>
</dbReference>
<dbReference type="PIR" id="A40083">
    <property type="entry name" value="A40083"/>
</dbReference>
<dbReference type="RefSeq" id="NP_013025.3">
    <property type="nucleotide sequence ID" value="NM_001179889.3"/>
</dbReference>
<dbReference type="SMR" id="P22035"/>
<dbReference type="BioGRID" id="34230">
    <property type="interactions" value="297"/>
</dbReference>
<dbReference type="DIP" id="DIP-142N"/>
<dbReference type="FunCoup" id="P22035">
    <property type="interactions" value="2958"/>
</dbReference>
<dbReference type="IntAct" id="P22035">
    <property type="interactions" value="9"/>
</dbReference>
<dbReference type="MINT" id="P22035"/>
<dbReference type="STRING" id="4932.YKR099W"/>
<dbReference type="iPTMnet" id="P22035"/>
<dbReference type="PaxDb" id="4932-YKR099W"/>
<dbReference type="PeptideAtlas" id="P22035"/>
<dbReference type="EnsemblFungi" id="YKR099W_mRNA">
    <property type="protein sequence ID" value="YKR099W"/>
    <property type="gene ID" value="YKR099W"/>
</dbReference>
<dbReference type="GeneID" id="853974"/>
<dbReference type="KEGG" id="sce:YKR099W"/>
<dbReference type="AGR" id="SGD:S000001807"/>
<dbReference type="SGD" id="S000001807">
    <property type="gene designation" value="BAS1"/>
</dbReference>
<dbReference type="VEuPathDB" id="FungiDB:YKR099W"/>
<dbReference type="eggNOG" id="KOG0048">
    <property type="taxonomic scope" value="Eukaryota"/>
</dbReference>
<dbReference type="HOGENOM" id="CLU_021117_0_0_1"/>
<dbReference type="InParanoid" id="P22035"/>
<dbReference type="OMA" id="IHQHIHN"/>
<dbReference type="OrthoDB" id="2143914at2759"/>
<dbReference type="BioCyc" id="YEAST:G3O-32061-MONOMER"/>
<dbReference type="BioGRID-ORCS" id="853974">
    <property type="hits" value="2 hits in 13 CRISPR screens"/>
</dbReference>
<dbReference type="PRO" id="PR:P22035"/>
<dbReference type="Proteomes" id="UP000002311">
    <property type="component" value="Chromosome XI"/>
</dbReference>
<dbReference type="RNAct" id="P22035">
    <property type="molecule type" value="protein"/>
</dbReference>
<dbReference type="GO" id="GO:0005634">
    <property type="term" value="C:nucleus"/>
    <property type="evidence" value="ECO:0000314"/>
    <property type="project" value="SGD"/>
</dbReference>
<dbReference type="GO" id="GO:0000981">
    <property type="term" value="F:DNA-binding transcription factor activity, RNA polymerase II-specific"/>
    <property type="evidence" value="ECO:0000314"/>
    <property type="project" value="SGD"/>
</dbReference>
<dbReference type="GO" id="GO:0000978">
    <property type="term" value="F:RNA polymerase II cis-regulatory region sequence-specific DNA binding"/>
    <property type="evidence" value="ECO:0000314"/>
    <property type="project" value="SGD"/>
</dbReference>
<dbReference type="GO" id="GO:0045944">
    <property type="term" value="P:positive regulation of transcription by RNA polymerase II"/>
    <property type="evidence" value="ECO:0000314"/>
    <property type="project" value="SGD"/>
</dbReference>
<dbReference type="GO" id="GO:0006355">
    <property type="term" value="P:regulation of DNA-templated transcription"/>
    <property type="evidence" value="ECO:0000318"/>
    <property type="project" value="GO_Central"/>
</dbReference>
<dbReference type="CDD" id="cd00167">
    <property type="entry name" value="SANT"/>
    <property type="match status" value="2"/>
</dbReference>
<dbReference type="FunFam" id="1.10.10.60:FF:000498">
    <property type="entry name" value="Transcription factor"/>
    <property type="match status" value="1"/>
</dbReference>
<dbReference type="Gene3D" id="1.10.10.60">
    <property type="entry name" value="Homeodomain-like"/>
    <property type="match status" value="3"/>
</dbReference>
<dbReference type="InterPro" id="IPR009057">
    <property type="entry name" value="Homeodomain-like_sf"/>
</dbReference>
<dbReference type="InterPro" id="IPR051575">
    <property type="entry name" value="Myb-like_DNA-bd"/>
</dbReference>
<dbReference type="InterPro" id="IPR017930">
    <property type="entry name" value="Myb_dom"/>
</dbReference>
<dbReference type="InterPro" id="IPR001005">
    <property type="entry name" value="SANT/Myb"/>
</dbReference>
<dbReference type="InterPro" id="IPR017884">
    <property type="entry name" value="SANT_dom"/>
</dbReference>
<dbReference type="PANTHER" id="PTHR46621">
    <property type="entry name" value="SNRNA-ACTIVATING PROTEIN COMPLEX SUBUNIT 4"/>
    <property type="match status" value="1"/>
</dbReference>
<dbReference type="PANTHER" id="PTHR46621:SF1">
    <property type="entry name" value="SNRNA-ACTIVATING PROTEIN COMPLEX SUBUNIT 4"/>
    <property type="match status" value="1"/>
</dbReference>
<dbReference type="Pfam" id="PF00249">
    <property type="entry name" value="Myb_DNA-binding"/>
    <property type="match status" value="2"/>
</dbReference>
<dbReference type="SMART" id="SM00717">
    <property type="entry name" value="SANT"/>
    <property type="match status" value="3"/>
</dbReference>
<dbReference type="SUPFAM" id="SSF46689">
    <property type="entry name" value="Homeodomain-like"/>
    <property type="match status" value="1"/>
</dbReference>
<dbReference type="PROSITE" id="PS51294">
    <property type="entry name" value="HTH_MYB"/>
    <property type="match status" value="2"/>
</dbReference>
<dbReference type="PROSITE" id="PS50090">
    <property type="entry name" value="MYB_LIKE"/>
    <property type="match status" value="1"/>
</dbReference>
<gene>
    <name type="primary">BAS1</name>
    <name type="ordered locus">YKR099W</name>
</gene>
<proteinExistence type="evidence at protein level"/>
<feature type="chain" id="PRO_0000197085" description="Myb-like DNA-binding protein BAS1">
    <location>
        <begin position="1"/>
        <end position="811"/>
    </location>
</feature>
<feature type="domain" description="Myb-like" evidence="1">
    <location>
        <begin position="34"/>
        <end position="110"/>
    </location>
</feature>
<feature type="domain" description="HTH myb-type 1" evidence="2">
    <location>
        <begin position="111"/>
        <end position="165"/>
    </location>
</feature>
<feature type="domain" description="HTH myb-type 2" evidence="2">
    <location>
        <begin position="166"/>
        <end position="218"/>
    </location>
</feature>
<feature type="DNA-binding region" description="H-T-H motif" evidence="2">
    <location>
        <begin position="138"/>
        <end position="161"/>
    </location>
</feature>
<feature type="DNA-binding region" description="H-T-H motif" evidence="2">
    <location>
        <begin position="191"/>
        <end position="214"/>
    </location>
</feature>
<feature type="region of interest" description="Disordered" evidence="3">
    <location>
        <begin position="237"/>
        <end position="320"/>
    </location>
</feature>
<feature type="region of interest" description="Disordered" evidence="3">
    <location>
        <begin position="348"/>
        <end position="379"/>
    </location>
</feature>
<feature type="region of interest" description="Disordered" evidence="3">
    <location>
        <begin position="535"/>
        <end position="713"/>
    </location>
</feature>
<feature type="region of interest" description="Disordered" evidence="3">
    <location>
        <begin position="782"/>
        <end position="811"/>
    </location>
</feature>
<feature type="compositionally biased region" description="Basic and acidic residues" evidence="3">
    <location>
        <begin position="237"/>
        <end position="264"/>
    </location>
</feature>
<feature type="compositionally biased region" description="Low complexity" evidence="3">
    <location>
        <begin position="265"/>
        <end position="275"/>
    </location>
</feature>
<feature type="compositionally biased region" description="Basic and acidic residues" evidence="3">
    <location>
        <begin position="282"/>
        <end position="298"/>
    </location>
</feature>
<feature type="compositionally biased region" description="Polar residues" evidence="3">
    <location>
        <begin position="348"/>
        <end position="366"/>
    </location>
</feature>
<feature type="compositionally biased region" description="Polar residues" evidence="3">
    <location>
        <begin position="535"/>
        <end position="613"/>
    </location>
</feature>
<feature type="compositionally biased region" description="Polar residues" evidence="3">
    <location>
        <begin position="653"/>
        <end position="664"/>
    </location>
</feature>
<feature type="compositionally biased region" description="Basic and acidic residues" evidence="3">
    <location>
        <begin position="782"/>
        <end position="794"/>
    </location>
</feature>
<protein>
    <recommendedName>
        <fullName>Myb-like DNA-binding protein BAS1</fullName>
    </recommendedName>
</protein>
<sequence>MSNISTKDIRKSKPKRGSGFDLLEVTESLGYQTHRKNGRNSWSKDDDNMLRSLVNESAKELGYENGLEDVKTIQQSNHLSKCIAWDVLATRFKHTVRTSKDVRKRWTGSLDPNLKKGKWTQEEDEQLLKAYEEHGPHWLSISMDIPGRTEDQCAKRYIEVLGPGSKGRLREWTLEEDLNLISKVKAYGTKWRKISSEMEFRPSLTCRNRWRKIITMVVRGQASEVITKAIKENKNIDMTDGKLRQHPIADSDIRSDSTPNKEEQLQLSQQNNPSLIKQDILNVKENESSKLPRLKDNDGPILNDSKPQALPPLKEISAPPPIRMTQVGQTHTSGSIRSKVSLPIEGLSQMNKQSPGGISDSPQTSLPPAFNPASLDEHMMNSNSISDSPKHAYSTVKTREPNSSSTQWKFTLKDGQGLSISNGTIDSTKLVKELVDQAKKYSLKISIHQHIHNHYVTSTDHPVSSNTGLSNIGNINGNPLLMDSFPHMGRQLGNGLPGLNSNSDTFNPEYRTSLDNMDSDFLSRTPNYNAFSLEATSHNPADNANELGSQSNRETNSPSVFYPQANTLIPTNSTATNNEIIQGNVSANSMSPNFNGTNGKAPSSTASYTTSGSEMPPDVGPNRIAHFNYLPPTIRPHLGSSDATRGADLNKLLNPSPNSVRSNGSKTKKKEKRKSESSQHHSSSSVTTNKFNHIDQSEISRTTSRSDTPLRDEDGLDFWETLRSLATTNPNPPVEKSAENDGAKPQVVHQGIGSHTEDSSLGSHSGGYDFFNELLDKKADTLHNEAKKTSEHDMTSGGSTDNGSVLPLNPS</sequence>
<accession>P22035</accession>
<accession>D6VXG0</accession>
<keyword id="KW-0010">Activator</keyword>
<keyword id="KW-0238">DNA-binding</keyword>
<keyword id="KW-0539">Nucleus</keyword>
<keyword id="KW-1185">Reference proteome</keyword>
<keyword id="KW-0677">Repeat</keyword>
<keyword id="KW-0804">Transcription</keyword>
<keyword id="KW-0805">Transcription regulation</keyword>
<comment type="function">
    <text evidence="5">Activates HIS4 transcription only in combination with PHO2/BAS2. BAS1 is also involved in the regulation of the purine biosynthesis pathway.</text>
</comment>
<comment type="subunit">
    <text>Monomer.</text>
</comment>
<comment type="subcellular location">
    <subcellularLocation>
        <location>Nucleus</location>
    </subcellularLocation>
</comment>
<comment type="miscellaneous">
    <text evidence="4">Present with 861 molecules/cell in log phase SD medium.</text>
</comment>